<feature type="chain" id="PRO_1000214209" description="Riboflavin biosynthesis protein RibBA">
    <location>
        <begin position="1"/>
        <end position="424"/>
    </location>
</feature>
<feature type="region of interest" description="DHBP synthase">
    <location>
        <begin position="1"/>
        <end position="204"/>
    </location>
</feature>
<feature type="region of interest" description="GTP cyclohydrolase II">
    <location>
        <begin position="205"/>
        <end position="424"/>
    </location>
</feature>
<feature type="active site" description="Proton acceptor; for GTP cyclohydrolase activity" evidence="1">
    <location>
        <position position="337"/>
    </location>
</feature>
<feature type="active site" description="Nucleophile; for GTP cyclohydrolase activity" evidence="1">
    <location>
        <position position="339"/>
    </location>
</feature>
<feature type="binding site" evidence="1">
    <location>
        <begin position="28"/>
        <end position="29"/>
    </location>
    <ligand>
        <name>D-ribulose 5-phosphate</name>
        <dbReference type="ChEBI" id="CHEBI:58121"/>
    </ligand>
</feature>
<feature type="binding site" evidence="1">
    <location>
        <position position="29"/>
    </location>
    <ligand>
        <name>Mg(2+)</name>
        <dbReference type="ChEBI" id="CHEBI:18420"/>
        <label>1</label>
    </ligand>
</feature>
<feature type="binding site" evidence="1">
    <location>
        <position position="29"/>
    </location>
    <ligand>
        <name>Mg(2+)</name>
        <dbReference type="ChEBI" id="CHEBI:18420"/>
        <label>2</label>
    </ligand>
</feature>
<feature type="binding site" evidence="1">
    <location>
        <position position="33"/>
    </location>
    <ligand>
        <name>D-ribulose 5-phosphate</name>
        <dbReference type="ChEBI" id="CHEBI:58121"/>
    </ligand>
</feature>
<feature type="binding site" evidence="1">
    <location>
        <begin position="141"/>
        <end position="145"/>
    </location>
    <ligand>
        <name>D-ribulose 5-phosphate</name>
        <dbReference type="ChEBI" id="CHEBI:58121"/>
    </ligand>
</feature>
<feature type="binding site" evidence="1">
    <location>
        <position position="144"/>
    </location>
    <ligand>
        <name>Mg(2+)</name>
        <dbReference type="ChEBI" id="CHEBI:18420"/>
        <label>2</label>
    </ligand>
</feature>
<feature type="binding site" evidence="1">
    <location>
        <position position="165"/>
    </location>
    <ligand>
        <name>D-ribulose 5-phosphate</name>
        <dbReference type="ChEBI" id="CHEBI:58121"/>
    </ligand>
</feature>
<feature type="binding site" evidence="1">
    <location>
        <begin position="259"/>
        <end position="263"/>
    </location>
    <ligand>
        <name>GTP</name>
        <dbReference type="ChEBI" id="CHEBI:37565"/>
    </ligand>
</feature>
<feature type="binding site" evidence="1">
    <location>
        <position position="264"/>
    </location>
    <ligand>
        <name>Zn(2+)</name>
        <dbReference type="ChEBI" id="CHEBI:29105"/>
        <note>catalytic</note>
    </ligand>
</feature>
<feature type="binding site" evidence="1">
    <location>
        <position position="275"/>
    </location>
    <ligand>
        <name>Zn(2+)</name>
        <dbReference type="ChEBI" id="CHEBI:29105"/>
        <note>catalytic</note>
    </ligand>
</feature>
<feature type="binding site" evidence="1">
    <location>
        <position position="277"/>
    </location>
    <ligand>
        <name>Zn(2+)</name>
        <dbReference type="ChEBI" id="CHEBI:29105"/>
        <note>catalytic</note>
    </ligand>
</feature>
<feature type="binding site" evidence="1">
    <location>
        <position position="280"/>
    </location>
    <ligand>
        <name>GTP</name>
        <dbReference type="ChEBI" id="CHEBI:37565"/>
    </ligand>
</feature>
<feature type="binding site" evidence="1">
    <location>
        <begin position="303"/>
        <end position="305"/>
    </location>
    <ligand>
        <name>GTP</name>
        <dbReference type="ChEBI" id="CHEBI:37565"/>
    </ligand>
</feature>
<feature type="binding site" evidence="1">
    <location>
        <position position="325"/>
    </location>
    <ligand>
        <name>GTP</name>
        <dbReference type="ChEBI" id="CHEBI:37565"/>
    </ligand>
</feature>
<feature type="binding site" evidence="1">
    <location>
        <position position="360"/>
    </location>
    <ligand>
        <name>GTP</name>
        <dbReference type="ChEBI" id="CHEBI:37565"/>
    </ligand>
</feature>
<feature type="binding site" evidence="1">
    <location>
        <position position="365"/>
    </location>
    <ligand>
        <name>GTP</name>
        <dbReference type="ChEBI" id="CHEBI:37565"/>
    </ligand>
</feature>
<feature type="site" description="Essential for DHBP synthase activity" evidence="1">
    <location>
        <position position="127"/>
    </location>
</feature>
<feature type="site" description="Essential for DHBP synthase activity" evidence="1">
    <location>
        <position position="165"/>
    </location>
</feature>
<dbReference type="EC" id="4.1.99.12" evidence="1"/>
<dbReference type="EC" id="3.5.4.25" evidence="1"/>
<dbReference type="EMBL" id="AP008957">
    <property type="protein sequence ID" value="BAH33730.1"/>
    <property type="molecule type" value="Genomic_DNA"/>
</dbReference>
<dbReference type="RefSeq" id="WP_003944833.1">
    <property type="nucleotide sequence ID" value="NC_012490.1"/>
</dbReference>
<dbReference type="SMR" id="C0ZZE5"/>
<dbReference type="KEGG" id="rer:RER_30220"/>
<dbReference type="eggNOG" id="COG0108">
    <property type="taxonomic scope" value="Bacteria"/>
</dbReference>
<dbReference type="eggNOG" id="COG0807">
    <property type="taxonomic scope" value="Bacteria"/>
</dbReference>
<dbReference type="HOGENOM" id="CLU_020273_1_2_11"/>
<dbReference type="UniPathway" id="UPA00275">
    <property type="reaction ID" value="UER00399"/>
</dbReference>
<dbReference type="UniPathway" id="UPA00275">
    <property type="reaction ID" value="UER00400"/>
</dbReference>
<dbReference type="Proteomes" id="UP000002204">
    <property type="component" value="Chromosome"/>
</dbReference>
<dbReference type="GO" id="GO:0005829">
    <property type="term" value="C:cytosol"/>
    <property type="evidence" value="ECO:0007669"/>
    <property type="project" value="TreeGrafter"/>
</dbReference>
<dbReference type="GO" id="GO:0008686">
    <property type="term" value="F:3,4-dihydroxy-2-butanone-4-phosphate synthase activity"/>
    <property type="evidence" value="ECO:0007669"/>
    <property type="project" value="UniProtKB-UniRule"/>
</dbReference>
<dbReference type="GO" id="GO:0005525">
    <property type="term" value="F:GTP binding"/>
    <property type="evidence" value="ECO:0007669"/>
    <property type="project" value="UniProtKB-KW"/>
</dbReference>
<dbReference type="GO" id="GO:0003935">
    <property type="term" value="F:GTP cyclohydrolase II activity"/>
    <property type="evidence" value="ECO:0007669"/>
    <property type="project" value="UniProtKB-UniRule"/>
</dbReference>
<dbReference type="GO" id="GO:0000287">
    <property type="term" value="F:magnesium ion binding"/>
    <property type="evidence" value="ECO:0007669"/>
    <property type="project" value="UniProtKB-UniRule"/>
</dbReference>
<dbReference type="GO" id="GO:0030145">
    <property type="term" value="F:manganese ion binding"/>
    <property type="evidence" value="ECO:0007669"/>
    <property type="project" value="UniProtKB-UniRule"/>
</dbReference>
<dbReference type="GO" id="GO:0008270">
    <property type="term" value="F:zinc ion binding"/>
    <property type="evidence" value="ECO:0007669"/>
    <property type="project" value="UniProtKB-UniRule"/>
</dbReference>
<dbReference type="GO" id="GO:0009231">
    <property type="term" value="P:riboflavin biosynthetic process"/>
    <property type="evidence" value="ECO:0007669"/>
    <property type="project" value="UniProtKB-UniRule"/>
</dbReference>
<dbReference type="CDD" id="cd00641">
    <property type="entry name" value="GTP_cyclohydro2"/>
    <property type="match status" value="1"/>
</dbReference>
<dbReference type="FunFam" id="3.40.50.10990:FF:000001">
    <property type="entry name" value="Riboflavin biosynthesis protein RibBA"/>
    <property type="match status" value="1"/>
</dbReference>
<dbReference type="FunFam" id="3.90.870.10:FF:000001">
    <property type="entry name" value="Riboflavin biosynthesis protein RibBA"/>
    <property type="match status" value="1"/>
</dbReference>
<dbReference type="Gene3D" id="3.90.870.10">
    <property type="entry name" value="DHBP synthase"/>
    <property type="match status" value="1"/>
</dbReference>
<dbReference type="Gene3D" id="3.40.50.10990">
    <property type="entry name" value="GTP cyclohydrolase II"/>
    <property type="match status" value="1"/>
</dbReference>
<dbReference type="HAMAP" id="MF_00179">
    <property type="entry name" value="RibA"/>
    <property type="match status" value="1"/>
</dbReference>
<dbReference type="HAMAP" id="MF_00180">
    <property type="entry name" value="RibB"/>
    <property type="match status" value="1"/>
</dbReference>
<dbReference type="HAMAP" id="MF_01283">
    <property type="entry name" value="RibBA"/>
    <property type="match status" value="1"/>
</dbReference>
<dbReference type="InterPro" id="IPR017945">
    <property type="entry name" value="DHBP_synth_RibB-like_a/b_dom"/>
</dbReference>
<dbReference type="InterPro" id="IPR000422">
    <property type="entry name" value="DHBP_synthase_RibB"/>
</dbReference>
<dbReference type="InterPro" id="IPR032677">
    <property type="entry name" value="GTP_cyclohydro_II"/>
</dbReference>
<dbReference type="InterPro" id="IPR000926">
    <property type="entry name" value="RibA"/>
</dbReference>
<dbReference type="InterPro" id="IPR036144">
    <property type="entry name" value="RibA-like_sf"/>
</dbReference>
<dbReference type="InterPro" id="IPR016299">
    <property type="entry name" value="Riboflavin_synth_RibBA"/>
</dbReference>
<dbReference type="NCBIfam" id="NF001591">
    <property type="entry name" value="PRK00393.1"/>
    <property type="match status" value="1"/>
</dbReference>
<dbReference type="NCBIfam" id="NF006803">
    <property type="entry name" value="PRK09311.1"/>
    <property type="match status" value="1"/>
</dbReference>
<dbReference type="NCBIfam" id="TIGR00505">
    <property type="entry name" value="ribA"/>
    <property type="match status" value="1"/>
</dbReference>
<dbReference type="NCBIfam" id="TIGR00506">
    <property type="entry name" value="ribB"/>
    <property type="match status" value="1"/>
</dbReference>
<dbReference type="PANTHER" id="PTHR21327:SF18">
    <property type="entry name" value="3,4-DIHYDROXY-2-BUTANONE 4-PHOSPHATE SYNTHASE"/>
    <property type="match status" value="1"/>
</dbReference>
<dbReference type="PANTHER" id="PTHR21327">
    <property type="entry name" value="GTP CYCLOHYDROLASE II-RELATED"/>
    <property type="match status" value="1"/>
</dbReference>
<dbReference type="Pfam" id="PF00926">
    <property type="entry name" value="DHBP_synthase"/>
    <property type="match status" value="1"/>
</dbReference>
<dbReference type="Pfam" id="PF00925">
    <property type="entry name" value="GTP_cyclohydro2"/>
    <property type="match status" value="1"/>
</dbReference>
<dbReference type="PIRSF" id="PIRSF001259">
    <property type="entry name" value="RibA"/>
    <property type="match status" value="1"/>
</dbReference>
<dbReference type="SUPFAM" id="SSF142695">
    <property type="entry name" value="RibA-like"/>
    <property type="match status" value="1"/>
</dbReference>
<dbReference type="SUPFAM" id="SSF55821">
    <property type="entry name" value="YrdC/RibB"/>
    <property type="match status" value="1"/>
</dbReference>
<organism>
    <name type="scientific">Rhodococcus erythropolis (strain PR4 / NBRC 100887)</name>
    <dbReference type="NCBI Taxonomy" id="234621"/>
    <lineage>
        <taxon>Bacteria</taxon>
        <taxon>Bacillati</taxon>
        <taxon>Actinomycetota</taxon>
        <taxon>Actinomycetes</taxon>
        <taxon>Mycobacteriales</taxon>
        <taxon>Nocardiaceae</taxon>
        <taxon>Rhodococcus</taxon>
        <taxon>Rhodococcus erythropolis group</taxon>
    </lineage>
</organism>
<sequence>MTRFDSIERAVADIAAGKAVVVVDDEDRENEGDLIFAAEKATPELVAFMVRYTSGYLCVPLDGDDCDRLGLPPMYATNQDKHGTAYTVTVDAREGIGTGISASDRAATMRLLANPESGANDFTRPGHVVPLRAKEGGVLRRPGHTEAAVDLARMADLRPAGVICEIVSQKDEGAMAQTDELRVFADEHNLALISIADLIAWRRKHEKHVLRIAEARIPTRHGEFTAVGYTSIYDEVEHVALVRGDIAGPDGDGSDVLVRVHSECLTGDVFGSLRCDCGPQLDAALDMVAQEGRGVVLYMRGHEGRGIGLMHKLQAYQLQDAGSDTVDANLELGLPADARDYGIGAQILVDLGISSMRLLTNNPAKRVGLDGYGLQITDRVPMPLRANAENLTYLRTKRDRMGHDLIGLDEYEANQNTAQPGTAL</sequence>
<comment type="function">
    <text evidence="1">Catalyzes the conversion of D-ribulose 5-phosphate to formate and 3,4-dihydroxy-2-butanone 4-phosphate.</text>
</comment>
<comment type="function">
    <text evidence="1">Catalyzes the conversion of GTP to 2,5-diamino-6-ribosylamino-4(3H)-pyrimidinone 5'-phosphate (DARP), formate and pyrophosphate.</text>
</comment>
<comment type="catalytic activity">
    <reaction evidence="1">
        <text>D-ribulose 5-phosphate = (2S)-2-hydroxy-3-oxobutyl phosphate + formate + H(+)</text>
        <dbReference type="Rhea" id="RHEA:18457"/>
        <dbReference type="ChEBI" id="CHEBI:15378"/>
        <dbReference type="ChEBI" id="CHEBI:15740"/>
        <dbReference type="ChEBI" id="CHEBI:58121"/>
        <dbReference type="ChEBI" id="CHEBI:58830"/>
        <dbReference type="EC" id="4.1.99.12"/>
    </reaction>
</comment>
<comment type="catalytic activity">
    <reaction evidence="1">
        <text>GTP + 4 H2O = 2,5-diamino-6-hydroxy-4-(5-phosphoribosylamino)-pyrimidine + formate + 2 phosphate + 3 H(+)</text>
        <dbReference type="Rhea" id="RHEA:23704"/>
        <dbReference type="ChEBI" id="CHEBI:15377"/>
        <dbReference type="ChEBI" id="CHEBI:15378"/>
        <dbReference type="ChEBI" id="CHEBI:15740"/>
        <dbReference type="ChEBI" id="CHEBI:37565"/>
        <dbReference type="ChEBI" id="CHEBI:43474"/>
        <dbReference type="ChEBI" id="CHEBI:58614"/>
        <dbReference type="EC" id="3.5.4.25"/>
    </reaction>
</comment>
<comment type="cofactor">
    <cofactor evidence="1">
        <name>Mg(2+)</name>
        <dbReference type="ChEBI" id="CHEBI:18420"/>
    </cofactor>
    <cofactor evidence="1">
        <name>Mn(2+)</name>
        <dbReference type="ChEBI" id="CHEBI:29035"/>
    </cofactor>
    <text evidence="1">Binds 2 divalent metal cations per subunit. Magnesium or manganese.</text>
</comment>
<comment type="cofactor">
    <cofactor evidence="1">
        <name>Zn(2+)</name>
        <dbReference type="ChEBI" id="CHEBI:29105"/>
    </cofactor>
    <text evidence="1">Binds 1 zinc ion per subunit.</text>
</comment>
<comment type="pathway">
    <text evidence="1">Cofactor biosynthesis; riboflavin biosynthesis; 2-hydroxy-3-oxobutyl phosphate from D-ribulose 5-phosphate: step 1/1.</text>
</comment>
<comment type="pathway">
    <text evidence="1">Cofactor biosynthesis; riboflavin biosynthesis; 5-amino-6-(D-ribitylamino)uracil from GTP: step 1/4.</text>
</comment>
<comment type="similarity">
    <text evidence="1">In the N-terminal section; belongs to the DHBP synthase family.</text>
</comment>
<comment type="similarity">
    <text evidence="1">In the C-terminal section; belongs to the GTP cyclohydrolase II family.</text>
</comment>
<protein>
    <recommendedName>
        <fullName evidence="1">Riboflavin biosynthesis protein RibBA</fullName>
    </recommendedName>
    <domain>
        <recommendedName>
            <fullName evidence="1">3,4-dihydroxy-2-butanone 4-phosphate synthase</fullName>
            <shortName evidence="1">DHBP synthase</shortName>
            <ecNumber evidence="1">4.1.99.12</ecNumber>
        </recommendedName>
    </domain>
    <domain>
        <recommendedName>
            <fullName evidence="1">GTP cyclohydrolase-2</fullName>
            <ecNumber evidence="1">3.5.4.25</ecNumber>
        </recommendedName>
        <alternativeName>
            <fullName evidence="1">GTP cyclohydrolase II</fullName>
        </alternativeName>
    </domain>
</protein>
<proteinExistence type="inferred from homology"/>
<accession>C0ZZE5</accession>
<name>RIBBA_RHOE4</name>
<reference key="1">
    <citation type="submission" date="2005-03" db="EMBL/GenBank/DDBJ databases">
        <title>Comparison of the complete genome sequences of Rhodococcus erythropolis PR4 and Rhodococcus opacus B4.</title>
        <authorList>
            <person name="Takarada H."/>
            <person name="Sekine M."/>
            <person name="Hosoyama A."/>
            <person name="Yamada R."/>
            <person name="Fujisawa T."/>
            <person name="Omata S."/>
            <person name="Shimizu A."/>
            <person name="Tsukatani N."/>
            <person name="Tanikawa S."/>
            <person name="Fujita N."/>
            <person name="Harayama S."/>
        </authorList>
    </citation>
    <scope>NUCLEOTIDE SEQUENCE [LARGE SCALE GENOMIC DNA]</scope>
    <source>
        <strain>PR4 / NBRC 100887</strain>
    </source>
</reference>
<evidence type="ECO:0000255" key="1">
    <source>
        <dbReference type="HAMAP-Rule" id="MF_01283"/>
    </source>
</evidence>
<gene>
    <name evidence="1" type="primary">ribBA</name>
    <name type="ordered locus">RER_30220</name>
</gene>
<keyword id="KW-0342">GTP-binding</keyword>
<keyword id="KW-0378">Hydrolase</keyword>
<keyword id="KW-0456">Lyase</keyword>
<keyword id="KW-0460">Magnesium</keyword>
<keyword id="KW-0464">Manganese</keyword>
<keyword id="KW-0479">Metal-binding</keyword>
<keyword id="KW-0511">Multifunctional enzyme</keyword>
<keyword id="KW-0547">Nucleotide-binding</keyword>
<keyword id="KW-0686">Riboflavin biosynthesis</keyword>
<keyword id="KW-0862">Zinc</keyword>